<evidence type="ECO:0000255" key="1">
    <source>
        <dbReference type="HAMAP-Rule" id="MF_01371"/>
    </source>
</evidence>
<evidence type="ECO:0000305" key="2"/>
<accession>A5N4R5</accession>
<keyword id="KW-1185">Reference proteome</keyword>
<keyword id="KW-0687">Ribonucleoprotein</keyword>
<keyword id="KW-0689">Ribosomal protein</keyword>
<dbReference type="EMBL" id="CP000673">
    <property type="protein sequence ID" value="EDK32296.1"/>
    <property type="molecule type" value="Genomic_DNA"/>
</dbReference>
<dbReference type="RefSeq" id="WP_011988821.1">
    <property type="nucleotide sequence ID" value="NC_009706.1"/>
</dbReference>
<dbReference type="SMR" id="A5N4R5"/>
<dbReference type="STRING" id="431943.CKL_0242"/>
<dbReference type="KEGG" id="ckl:CKL_0242"/>
<dbReference type="eggNOG" id="COG1841">
    <property type="taxonomic scope" value="Bacteria"/>
</dbReference>
<dbReference type="HOGENOM" id="CLU_131047_1_3_9"/>
<dbReference type="Proteomes" id="UP000002411">
    <property type="component" value="Chromosome"/>
</dbReference>
<dbReference type="GO" id="GO:0022625">
    <property type="term" value="C:cytosolic large ribosomal subunit"/>
    <property type="evidence" value="ECO:0007669"/>
    <property type="project" value="TreeGrafter"/>
</dbReference>
<dbReference type="GO" id="GO:0003735">
    <property type="term" value="F:structural constituent of ribosome"/>
    <property type="evidence" value="ECO:0007669"/>
    <property type="project" value="InterPro"/>
</dbReference>
<dbReference type="GO" id="GO:0006412">
    <property type="term" value="P:translation"/>
    <property type="evidence" value="ECO:0007669"/>
    <property type="project" value="UniProtKB-UniRule"/>
</dbReference>
<dbReference type="CDD" id="cd01658">
    <property type="entry name" value="Ribosomal_L30"/>
    <property type="match status" value="1"/>
</dbReference>
<dbReference type="FunFam" id="3.30.1390.20:FF:000001">
    <property type="entry name" value="50S ribosomal protein L30"/>
    <property type="match status" value="1"/>
</dbReference>
<dbReference type="Gene3D" id="3.30.1390.20">
    <property type="entry name" value="Ribosomal protein L30, ferredoxin-like fold domain"/>
    <property type="match status" value="1"/>
</dbReference>
<dbReference type="HAMAP" id="MF_01371_B">
    <property type="entry name" value="Ribosomal_uL30_B"/>
    <property type="match status" value="1"/>
</dbReference>
<dbReference type="InterPro" id="IPR036919">
    <property type="entry name" value="Ribo_uL30_ferredoxin-like_sf"/>
</dbReference>
<dbReference type="InterPro" id="IPR005996">
    <property type="entry name" value="Ribosomal_uL30_bac-type"/>
</dbReference>
<dbReference type="InterPro" id="IPR016082">
    <property type="entry name" value="Ribosomal_uL30_ferredoxin-like"/>
</dbReference>
<dbReference type="NCBIfam" id="TIGR01308">
    <property type="entry name" value="rpmD_bact"/>
    <property type="match status" value="1"/>
</dbReference>
<dbReference type="PANTHER" id="PTHR15892:SF2">
    <property type="entry name" value="LARGE RIBOSOMAL SUBUNIT PROTEIN UL30M"/>
    <property type="match status" value="1"/>
</dbReference>
<dbReference type="PANTHER" id="PTHR15892">
    <property type="entry name" value="MITOCHONDRIAL RIBOSOMAL PROTEIN L30"/>
    <property type="match status" value="1"/>
</dbReference>
<dbReference type="Pfam" id="PF00327">
    <property type="entry name" value="Ribosomal_L30"/>
    <property type="match status" value="1"/>
</dbReference>
<dbReference type="PIRSF" id="PIRSF002211">
    <property type="entry name" value="Ribosomal_L30_bac-type"/>
    <property type="match status" value="1"/>
</dbReference>
<dbReference type="SUPFAM" id="SSF55129">
    <property type="entry name" value="Ribosomal protein L30p/L7e"/>
    <property type="match status" value="1"/>
</dbReference>
<name>RL30_CLOK5</name>
<protein>
    <recommendedName>
        <fullName evidence="1">Large ribosomal subunit protein uL30</fullName>
    </recommendedName>
    <alternativeName>
        <fullName evidence="2">50S ribosomal protein L30</fullName>
    </alternativeName>
</protein>
<reference key="1">
    <citation type="journal article" date="2008" name="Proc. Natl. Acad. Sci. U.S.A.">
        <title>The genome of Clostridium kluyveri, a strict anaerobe with unique metabolic features.</title>
        <authorList>
            <person name="Seedorf H."/>
            <person name="Fricke W.F."/>
            <person name="Veith B."/>
            <person name="Brueggemann H."/>
            <person name="Liesegang H."/>
            <person name="Strittmatter A."/>
            <person name="Miethke M."/>
            <person name="Buckel W."/>
            <person name="Hinderberger J."/>
            <person name="Li F."/>
            <person name="Hagemeier C."/>
            <person name="Thauer R.K."/>
            <person name="Gottschalk G."/>
        </authorList>
    </citation>
    <scope>NUCLEOTIDE SEQUENCE [LARGE SCALE GENOMIC DNA]</scope>
    <source>
        <strain>ATCC 8527 / DSM 555 / NBRC 12016 / NCIMB 10680 / K1</strain>
    </source>
</reference>
<sequence>MAKLKITLKKSLIGRKKDHIATVNALGLKKIGKVVEHEDNPQIKGMIKKVSYLLEVEEV</sequence>
<feature type="chain" id="PRO_1000087244" description="Large ribosomal subunit protein uL30">
    <location>
        <begin position="1"/>
        <end position="59"/>
    </location>
</feature>
<proteinExistence type="inferred from homology"/>
<comment type="subunit">
    <text evidence="1">Part of the 50S ribosomal subunit.</text>
</comment>
<comment type="similarity">
    <text evidence="1">Belongs to the universal ribosomal protein uL30 family.</text>
</comment>
<organism>
    <name type="scientific">Clostridium kluyveri (strain ATCC 8527 / DSM 555 / NBRC 12016 / NCIMB 10680 / K1)</name>
    <dbReference type="NCBI Taxonomy" id="431943"/>
    <lineage>
        <taxon>Bacteria</taxon>
        <taxon>Bacillati</taxon>
        <taxon>Bacillota</taxon>
        <taxon>Clostridia</taxon>
        <taxon>Eubacteriales</taxon>
        <taxon>Clostridiaceae</taxon>
        <taxon>Clostridium</taxon>
    </lineage>
</organism>
<gene>
    <name evidence="1" type="primary">rpmD</name>
    <name type="ordered locus">CKL_0242</name>
</gene>